<keyword id="KW-0007">Acetylation</keyword>
<keyword id="KW-0507">mRNA processing</keyword>
<keyword id="KW-0508">mRNA splicing</keyword>
<keyword id="KW-0539">Nucleus</keyword>
<keyword id="KW-1185">Reference proteome</keyword>
<keyword id="KW-0677">Repeat</keyword>
<keyword id="KW-0747">Spliceosome</keyword>
<keyword id="KW-0853">WD repeat</keyword>
<proteinExistence type="evidence at transcript level"/>
<sequence>MASSRASSTATKTKAPDDLVAPVVKKPHIYYGSLEEKERERLAKGESGILGKEGLKAGIEAGNINITSGEVFEIEEHISERQAEVLAEFERRKRARQINVSTDDSEVKACLRALGEPITLFGEGPAERRERLRNILSVVGTDALKKTKKDDEKSKKSKEEYQQTWYHEGPNSLKVARLWIANYSLPRAMKRLEEARLHKEIPETTRASQMQELHKSLRSLNNFCSQIGDDRPISYCHFSPNSKMLATACWSGLCKLWSVPDCNLLHTLRGHNTNVGAIVFHPKSTVSLDQKDVNLASCAADGSVKLWSLDSDEPVADIEGHTVRVARVMWHPSGRFLGTTCYDRSWRLWDLEAQEEILHQEGHSMGVYDIAFHQDGSLAGTGGLDAFGRVWDLRTGRCIMFLEGHLKEIYGINFSPNGYHIATGSGDNTCKVWDLRQRRCVYTIPAHQNLVTGVKFEPIHGNFLLTGAYDNTAKIWTHPGWSPLKTLAGHEGKVMGLDISSDGQLIATCSYDRTFKLWMAE</sequence>
<evidence type="ECO:0000250" key="1">
    <source>
        <dbReference type="UniProtKB" id="O43172"/>
    </source>
</evidence>
<reference key="1">
    <citation type="submission" date="2004-11" db="EMBL/GenBank/DDBJ databases">
        <authorList>
            <consortium name="The German cDNA consortium"/>
        </authorList>
    </citation>
    <scope>NUCLEOTIDE SEQUENCE [LARGE SCALE MRNA]</scope>
    <source>
        <tissue>Brain cortex</tissue>
    </source>
</reference>
<protein>
    <recommendedName>
        <fullName>U4/U6 small nuclear ribonucleoprotein Prp4</fullName>
    </recommendedName>
    <alternativeName>
        <fullName>U4/U6 snRNP 60 kDa protein</fullName>
    </alternativeName>
    <alternativeName>
        <fullName>WD splicing factor Prp4</fullName>
    </alternativeName>
</protein>
<organism>
    <name type="scientific">Pongo abelii</name>
    <name type="common">Sumatran orangutan</name>
    <name type="synonym">Pongo pygmaeus abelii</name>
    <dbReference type="NCBI Taxonomy" id="9601"/>
    <lineage>
        <taxon>Eukaryota</taxon>
        <taxon>Metazoa</taxon>
        <taxon>Chordata</taxon>
        <taxon>Craniata</taxon>
        <taxon>Vertebrata</taxon>
        <taxon>Euteleostomi</taxon>
        <taxon>Mammalia</taxon>
        <taxon>Eutheria</taxon>
        <taxon>Euarchontoglires</taxon>
        <taxon>Primates</taxon>
        <taxon>Haplorrhini</taxon>
        <taxon>Catarrhini</taxon>
        <taxon>Hominidae</taxon>
        <taxon>Pongo</taxon>
    </lineage>
</organism>
<gene>
    <name type="primary">PRPF4</name>
</gene>
<name>PRP4_PONAB</name>
<accession>Q5NVD0</accession>
<dbReference type="EMBL" id="CR926107">
    <property type="protein sequence ID" value="CAI29733.1"/>
    <property type="molecule type" value="mRNA"/>
</dbReference>
<dbReference type="RefSeq" id="NP_001127122.1">
    <property type="nucleotide sequence ID" value="NM_001133650.1"/>
</dbReference>
<dbReference type="SMR" id="Q5NVD0"/>
<dbReference type="FunCoup" id="Q5NVD0">
    <property type="interactions" value="3473"/>
</dbReference>
<dbReference type="GeneID" id="100174168"/>
<dbReference type="KEGG" id="pon:100174168"/>
<dbReference type="CTD" id="9128"/>
<dbReference type="InParanoid" id="Q5NVD0"/>
<dbReference type="OrthoDB" id="540662at2759"/>
<dbReference type="Proteomes" id="UP000001595">
    <property type="component" value="Unplaced"/>
</dbReference>
<dbReference type="GO" id="GO:0016607">
    <property type="term" value="C:nuclear speck"/>
    <property type="evidence" value="ECO:0000250"/>
    <property type="project" value="UniProtKB"/>
</dbReference>
<dbReference type="GO" id="GO:0005681">
    <property type="term" value="C:spliceosomal complex"/>
    <property type="evidence" value="ECO:0007669"/>
    <property type="project" value="UniProtKB-KW"/>
</dbReference>
<dbReference type="GO" id="GO:0097525">
    <property type="term" value="C:spliceosomal snRNP complex"/>
    <property type="evidence" value="ECO:0000250"/>
    <property type="project" value="UniProtKB"/>
</dbReference>
<dbReference type="GO" id="GO:0071001">
    <property type="term" value="C:U4/U6 snRNP"/>
    <property type="evidence" value="ECO:0000250"/>
    <property type="project" value="UniProtKB"/>
</dbReference>
<dbReference type="GO" id="GO:0046540">
    <property type="term" value="C:U4/U6 x U5 tri-snRNP complex"/>
    <property type="evidence" value="ECO:0007669"/>
    <property type="project" value="TreeGrafter"/>
</dbReference>
<dbReference type="GO" id="GO:0030621">
    <property type="term" value="F:U4 snRNA binding"/>
    <property type="evidence" value="ECO:0007669"/>
    <property type="project" value="TreeGrafter"/>
</dbReference>
<dbReference type="GO" id="GO:0017070">
    <property type="term" value="F:U6 snRNA binding"/>
    <property type="evidence" value="ECO:0007669"/>
    <property type="project" value="TreeGrafter"/>
</dbReference>
<dbReference type="GO" id="GO:0000398">
    <property type="term" value="P:mRNA splicing, via spliceosome"/>
    <property type="evidence" value="ECO:0007669"/>
    <property type="project" value="TreeGrafter"/>
</dbReference>
<dbReference type="CDD" id="cd00200">
    <property type="entry name" value="WD40"/>
    <property type="match status" value="1"/>
</dbReference>
<dbReference type="FunFam" id="2.130.10.10:FF:000147">
    <property type="entry name" value="U4/U6 small nuclear ribonucleoprotein Prp4"/>
    <property type="match status" value="1"/>
</dbReference>
<dbReference type="FunFam" id="2.130.10.10:FF:000356">
    <property type="entry name" value="U4/U6 small nuclear ribonucleoprotein Prp4"/>
    <property type="match status" value="1"/>
</dbReference>
<dbReference type="FunFam" id="4.10.280.110:FF:000002">
    <property type="entry name" value="U4/U6 small nuclear ribonucleoprotein Prp4"/>
    <property type="match status" value="1"/>
</dbReference>
<dbReference type="FunFam" id="2.130.10.10:FF:000113">
    <property type="entry name" value="U4/U6 small nuclear ribonucleoprotein Prp4 isoform X1"/>
    <property type="match status" value="1"/>
</dbReference>
<dbReference type="Gene3D" id="4.10.280.110">
    <property type="entry name" value="Pre-mRNA processing factor 4 domain"/>
    <property type="match status" value="1"/>
</dbReference>
<dbReference type="Gene3D" id="2.130.10.10">
    <property type="entry name" value="YVTN repeat-like/Quinoprotein amine dehydrogenase"/>
    <property type="match status" value="3"/>
</dbReference>
<dbReference type="InterPro" id="IPR020472">
    <property type="entry name" value="G-protein_beta_WD-40_rep"/>
</dbReference>
<dbReference type="InterPro" id="IPR014906">
    <property type="entry name" value="PRP4-like"/>
</dbReference>
<dbReference type="InterPro" id="IPR036285">
    <property type="entry name" value="PRP4-like_sf"/>
</dbReference>
<dbReference type="InterPro" id="IPR015943">
    <property type="entry name" value="WD40/YVTN_repeat-like_dom_sf"/>
</dbReference>
<dbReference type="InterPro" id="IPR019775">
    <property type="entry name" value="WD40_repeat_CS"/>
</dbReference>
<dbReference type="InterPro" id="IPR036322">
    <property type="entry name" value="WD40_repeat_dom_sf"/>
</dbReference>
<dbReference type="InterPro" id="IPR001680">
    <property type="entry name" value="WD40_rpt"/>
</dbReference>
<dbReference type="PANTHER" id="PTHR19846:SF5">
    <property type="entry name" value="U4_U6 SMALL NUCLEAR RIBONUCLEOPROTEIN PRP4"/>
    <property type="match status" value="1"/>
</dbReference>
<dbReference type="PANTHER" id="PTHR19846">
    <property type="entry name" value="WD40 REPEAT PROTEIN"/>
    <property type="match status" value="1"/>
</dbReference>
<dbReference type="Pfam" id="PF08799">
    <property type="entry name" value="PRP4"/>
    <property type="match status" value="1"/>
</dbReference>
<dbReference type="Pfam" id="PF00400">
    <property type="entry name" value="WD40"/>
    <property type="match status" value="7"/>
</dbReference>
<dbReference type="PRINTS" id="PR00320">
    <property type="entry name" value="GPROTEINBRPT"/>
</dbReference>
<dbReference type="SMART" id="SM00500">
    <property type="entry name" value="SFM"/>
    <property type="match status" value="1"/>
</dbReference>
<dbReference type="SMART" id="SM00320">
    <property type="entry name" value="WD40"/>
    <property type="match status" value="7"/>
</dbReference>
<dbReference type="SUPFAM" id="SSF158230">
    <property type="entry name" value="PRP4-like"/>
    <property type="match status" value="1"/>
</dbReference>
<dbReference type="SUPFAM" id="SSF50978">
    <property type="entry name" value="WD40 repeat-like"/>
    <property type="match status" value="1"/>
</dbReference>
<dbReference type="PROSITE" id="PS00678">
    <property type="entry name" value="WD_REPEATS_1"/>
    <property type="match status" value="2"/>
</dbReference>
<dbReference type="PROSITE" id="PS50082">
    <property type="entry name" value="WD_REPEATS_2"/>
    <property type="match status" value="6"/>
</dbReference>
<dbReference type="PROSITE" id="PS50294">
    <property type="entry name" value="WD_REPEATS_REGION"/>
    <property type="match status" value="1"/>
</dbReference>
<comment type="function">
    <text evidence="1">Plays a role in pre-mRNA splicing as component of the U4/U6-U5 tri-snRNP complex that is involved in spliceosome assembly, and as component of the precatalytic spliceosome (spliceosome B complex).</text>
</comment>
<comment type="subunit">
    <text evidence="1">Component of the precatalytic spliceosome (spliceosome B complex) (By similarity). Component of the U4/U6-U5 tri-snRNP complex, a building block of the precatalytic spliceosome (spliceosome B complex) (By similarity). The U4/U6-U5 tri-snRNP complex is composed of the U4, U6 and U5 snRNAs and at least PRPF3, PRPF4, PRPF6, PRPF8, PRPF31, SNRNP200, TXNL4A, SNRNP40, SNRPB, SNRPD1, SNRPD2, SNRPD3, SNRPE, SNRPF, SNRPG, DDX23, CD2BP2, PPIH, SNU13, EFTUD2, SART1 and USP39, plus LSM2, LSM3, LSM4, LSM5, LSM6, LSM7 and LSM8 (By similarity). Interacts directly with PRPF18, PPIH and PRPF3 (By similarity). Part of a heteromeric complex containing PPIH, PRPF3 and PRPF4 that is stable in the absence of RNA (By similarity). Interacts with ERCC6 (By similarity).</text>
</comment>
<comment type="subcellular location">
    <subcellularLocation>
        <location evidence="1">Nucleus</location>
    </subcellularLocation>
    <subcellularLocation>
        <location evidence="1">Nucleus speckle</location>
    </subcellularLocation>
</comment>
<feature type="chain" id="PRO_0000051151" description="U4/U6 small nuclear ribonucleoprotein Prp4">
    <location>
        <begin position="1"/>
        <end position="521"/>
    </location>
</feature>
<feature type="repeat" description="WD 1">
    <location>
        <begin position="228"/>
        <end position="267"/>
    </location>
</feature>
<feature type="repeat" description="WD 2">
    <location>
        <begin position="270"/>
        <end position="317"/>
    </location>
</feature>
<feature type="repeat" description="WD 3">
    <location>
        <begin position="320"/>
        <end position="359"/>
    </location>
</feature>
<feature type="repeat" description="WD 4">
    <location>
        <begin position="362"/>
        <end position="401"/>
    </location>
</feature>
<feature type="repeat" description="WD 5">
    <location>
        <begin position="404"/>
        <end position="443"/>
    </location>
</feature>
<feature type="repeat" description="WD 6">
    <location>
        <begin position="446"/>
        <end position="486"/>
    </location>
</feature>
<feature type="repeat" description="WD 7">
    <location>
        <begin position="489"/>
        <end position="521"/>
    </location>
</feature>
<feature type="modified residue" description="N6-acetyllysine" evidence="1">
    <location>
        <position position="26"/>
    </location>
</feature>